<comment type="function">
    <text evidence="3">Methyltransferase which mediates trimethylation of 'Lys-78' of cytochrome c (CYC1).</text>
</comment>
<comment type="catalytic activity">
    <reaction evidence="2 3">
        <text>L-lysyl-[cytochrome c] + S-adenosyl-L-methionine = N(6)-methyl-L-lysyl-[cytochrome c] + S-adenosyl-L-homocysteine + H(+)</text>
        <dbReference type="Rhea" id="RHEA:24312"/>
        <dbReference type="Rhea" id="RHEA-COMP:9754"/>
        <dbReference type="Rhea" id="RHEA-COMP:9755"/>
        <dbReference type="ChEBI" id="CHEBI:15378"/>
        <dbReference type="ChEBI" id="CHEBI:29969"/>
        <dbReference type="ChEBI" id="CHEBI:57856"/>
        <dbReference type="ChEBI" id="CHEBI:59789"/>
        <dbReference type="ChEBI" id="CHEBI:61929"/>
        <dbReference type="EC" id="2.1.1.59"/>
    </reaction>
</comment>
<comment type="subcellular location">
    <subcellularLocation>
        <location evidence="3">Cytoplasm</location>
        <location evidence="3">Cytosol</location>
    </subcellularLocation>
</comment>
<comment type="domain">
    <text evidence="5">The SET-like region, although related with the SET domain is not detected by any prediction method.</text>
</comment>
<comment type="miscellaneous">
    <text evidence="4">Present with 2940 molecules/cell in log phase SD medium.</text>
</comment>
<comment type="similarity">
    <text evidence="1 2">Belongs to the class V-like SAM-binding methyltransferase superfamily.</text>
</comment>
<name>CTM1_YEAST</name>
<evidence type="ECO:0000255" key="1">
    <source>
        <dbReference type="PROSITE-ProRule" id="PRU00190"/>
    </source>
</evidence>
<evidence type="ECO:0000255" key="2">
    <source>
        <dbReference type="PROSITE-ProRule" id="PRU00943"/>
    </source>
</evidence>
<evidence type="ECO:0000269" key="3">
    <source>
    </source>
</evidence>
<evidence type="ECO:0000269" key="4">
    <source>
    </source>
</evidence>
<evidence type="ECO:0000269" key="5">
    <source>
    </source>
</evidence>
<evidence type="ECO:0000305" key="6"/>
<feature type="chain" id="PRO_0000202911" description="Cytochrome c lysine N-methyltransferase 1">
    <location>
        <begin position="1"/>
        <end position="585"/>
    </location>
</feature>
<feature type="domain" description="SET" evidence="1">
    <location>
        <begin position="18"/>
        <end position="273"/>
    </location>
</feature>
<feature type="region of interest" description="SET-like">
    <location>
        <begin position="186"/>
        <end position="288"/>
    </location>
</feature>
<feature type="sequence conflict" description="In Ref. 3; AAU09741." evidence="6" ref="3">
    <original>K</original>
    <variation>R</variation>
    <location>
        <position position="256"/>
    </location>
</feature>
<keyword id="KW-0963">Cytoplasm</keyword>
<keyword id="KW-0489">Methyltransferase</keyword>
<keyword id="KW-1185">Reference proteome</keyword>
<keyword id="KW-0949">S-adenosyl-L-methionine</keyword>
<keyword id="KW-0808">Transferase</keyword>
<accession>P38818</accession>
<accession>D3DL59</accession>
<accession>Q66R84</accession>
<reference key="1">
    <citation type="journal article" date="1994" name="Science">
        <title>Complete nucleotide sequence of Saccharomyces cerevisiae chromosome VIII.</title>
        <authorList>
            <person name="Johnston M."/>
            <person name="Andrews S."/>
            <person name="Brinkman R."/>
            <person name="Cooper J."/>
            <person name="Ding H."/>
            <person name="Dover J."/>
            <person name="Du Z."/>
            <person name="Favello A."/>
            <person name="Fulton L."/>
            <person name="Gattung S."/>
            <person name="Geisel C."/>
            <person name="Kirsten J."/>
            <person name="Kucaba T."/>
            <person name="Hillier L.W."/>
            <person name="Jier M."/>
            <person name="Johnston L."/>
            <person name="Langston Y."/>
            <person name="Latreille P."/>
            <person name="Louis E.J."/>
            <person name="Macri C."/>
            <person name="Mardis E."/>
            <person name="Menezes S."/>
            <person name="Mouser L."/>
            <person name="Nhan M."/>
            <person name="Rifkin L."/>
            <person name="Riles L."/>
            <person name="St Peter H."/>
            <person name="Trevaskis E."/>
            <person name="Vaughan K."/>
            <person name="Vignati D."/>
            <person name="Wilcox L."/>
            <person name="Wohldman P."/>
            <person name="Waterston R."/>
            <person name="Wilson R."/>
            <person name="Vaudin M."/>
        </authorList>
    </citation>
    <scope>NUCLEOTIDE SEQUENCE [LARGE SCALE GENOMIC DNA]</scope>
    <source>
        <strain>ATCC 204508 / S288c</strain>
    </source>
</reference>
<reference key="2">
    <citation type="journal article" date="2014" name="G3 (Bethesda)">
        <title>The reference genome sequence of Saccharomyces cerevisiae: Then and now.</title>
        <authorList>
            <person name="Engel S.R."/>
            <person name="Dietrich F.S."/>
            <person name="Fisk D.G."/>
            <person name="Binkley G."/>
            <person name="Balakrishnan R."/>
            <person name="Costanzo M.C."/>
            <person name="Dwight S.S."/>
            <person name="Hitz B.C."/>
            <person name="Karra K."/>
            <person name="Nash R.S."/>
            <person name="Weng S."/>
            <person name="Wong E.D."/>
            <person name="Lloyd P."/>
            <person name="Skrzypek M.S."/>
            <person name="Miyasato S.R."/>
            <person name="Simison M."/>
            <person name="Cherry J.M."/>
        </authorList>
    </citation>
    <scope>GENOME REANNOTATION</scope>
    <source>
        <strain>ATCC 204508 / S288c</strain>
    </source>
</reference>
<reference key="3">
    <citation type="journal article" date="2007" name="Genome Res.">
        <title>Approaching a complete repository of sequence-verified protein-encoding clones for Saccharomyces cerevisiae.</title>
        <authorList>
            <person name="Hu Y."/>
            <person name="Rolfs A."/>
            <person name="Bhullar B."/>
            <person name="Murthy T.V.S."/>
            <person name="Zhu C."/>
            <person name="Berger M.F."/>
            <person name="Camargo A.A."/>
            <person name="Kelley F."/>
            <person name="McCarron S."/>
            <person name="Jepson D."/>
            <person name="Richardson A."/>
            <person name="Raphael J."/>
            <person name="Moreira D."/>
            <person name="Taycher E."/>
            <person name="Zuo D."/>
            <person name="Mohr S."/>
            <person name="Kane M.F."/>
            <person name="Williamson J."/>
            <person name="Simpson A.J.G."/>
            <person name="Bulyk M.L."/>
            <person name="Harlow E."/>
            <person name="Marsischky G."/>
            <person name="Kolodner R.D."/>
            <person name="LaBaer J."/>
        </authorList>
    </citation>
    <scope>NUCLEOTIDE SEQUENCE [GENOMIC DNA]</scope>
    <source>
        <strain>ATCC 204508 / S288c</strain>
    </source>
</reference>
<reference key="4">
    <citation type="journal article" date="2003" name="Nature">
        <title>Global analysis of protein expression in yeast.</title>
        <authorList>
            <person name="Ghaemmaghami S."/>
            <person name="Huh W.-K."/>
            <person name="Bower K."/>
            <person name="Howson R.W."/>
            <person name="Belle A."/>
            <person name="Dephoure N."/>
            <person name="O'Shea E.K."/>
            <person name="Weissman J.S."/>
        </authorList>
    </citation>
    <scope>LEVEL OF PROTEIN EXPRESSION [LARGE SCALE ANALYSIS]</scope>
</reference>
<reference key="5">
    <citation type="journal article" date="2000" name="J. Biol. Chem.">
        <title>Cytochrome c methyltransferase, Ctm1p, of yeast.</title>
        <authorList>
            <person name="Polevoda B."/>
            <person name="Martzen M.R."/>
            <person name="Das B."/>
            <person name="Phizicky E.M."/>
            <person name="Sherman F."/>
        </authorList>
    </citation>
    <scope>FUNCTION</scope>
    <scope>ENZYME ACTIVITY</scope>
    <scope>SUBCELLULAR LOCATION</scope>
</reference>
<reference key="6">
    <citation type="journal article" date="2005" name="J. Biol. Chem.">
        <title>A novel SET domain methyltransferase modifies ribosomal protein Rpl23ab in yeast.</title>
        <authorList>
            <person name="Porras-Yakushi T.R."/>
            <person name="Whitelegge J.P."/>
            <person name="Miranda T.B."/>
            <person name="Clarke S."/>
        </authorList>
    </citation>
    <scope>DOMAIN</scope>
</reference>
<dbReference type="EC" id="2.1.1.59"/>
<dbReference type="EMBL" id="U00059">
    <property type="protein sequence ID" value="AAB68855.1"/>
    <property type="molecule type" value="Genomic_DNA"/>
</dbReference>
<dbReference type="EMBL" id="AY723824">
    <property type="protein sequence ID" value="AAU09741.1"/>
    <property type="molecule type" value="Genomic_DNA"/>
</dbReference>
<dbReference type="EMBL" id="BK006934">
    <property type="protein sequence ID" value="DAA06803.1"/>
    <property type="molecule type" value="Genomic_DNA"/>
</dbReference>
<dbReference type="PIR" id="S48951">
    <property type="entry name" value="S48951"/>
</dbReference>
<dbReference type="RefSeq" id="NP_011977.1">
    <property type="nucleotide sequence ID" value="NM_001179239.1"/>
</dbReference>
<dbReference type="BioGRID" id="36542">
    <property type="interactions" value="52"/>
</dbReference>
<dbReference type="DIP" id="DIP-5597N"/>
<dbReference type="FunCoup" id="P38818">
    <property type="interactions" value="83"/>
</dbReference>
<dbReference type="IntAct" id="P38818">
    <property type="interactions" value="1"/>
</dbReference>
<dbReference type="STRING" id="4932.YHR109W"/>
<dbReference type="iPTMnet" id="P38818"/>
<dbReference type="PaxDb" id="4932-YHR109W"/>
<dbReference type="PeptideAtlas" id="P38818"/>
<dbReference type="EnsemblFungi" id="YHR109W_mRNA">
    <property type="protein sequence ID" value="YHR109W"/>
    <property type="gene ID" value="YHR109W"/>
</dbReference>
<dbReference type="GeneID" id="856509"/>
<dbReference type="KEGG" id="sce:YHR109W"/>
<dbReference type="AGR" id="SGD:S000001151"/>
<dbReference type="SGD" id="S000001151">
    <property type="gene designation" value="CTM1"/>
</dbReference>
<dbReference type="VEuPathDB" id="FungiDB:YHR109W"/>
<dbReference type="eggNOG" id="ENOG502RXKP">
    <property type="taxonomic scope" value="Eukaryota"/>
</dbReference>
<dbReference type="HOGENOM" id="CLU_026942_0_0_1"/>
<dbReference type="InParanoid" id="P38818"/>
<dbReference type="OMA" id="NEHALMI"/>
<dbReference type="OrthoDB" id="441812at2759"/>
<dbReference type="BioCyc" id="YEAST:YHR109W-MONOMER"/>
<dbReference type="BioGRID-ORCS" id="856509">
    <property type="hits" value="0 hits in 10 CRISPR screens"/>
</dbReference>
<dbReference type="PRO" id="PR:P38818"/>
<dbReference type="Proteomes" id="UP000002311">
    <property type="component" value="Chromosome VIII"/>
</dbReference>
<dbReference type="RNAct" id="P38818">
    <property type="molecule type" value="protein"/>
</dbReference>
<dbReference type="GO" id="GO:0005829">
    <property type="term" value="C:cytosol"/>
    <property type="evidence" value="ECO:0000314"/>
    <property type="project" value="SGD"/>
</dbReference>
<dbReference type="GO" id="GO:0000277">
    <property type="term" value="F:[cytochrome c]-lysine N-methyltransferase activity"/>
    <property type="evidence" value="ECO:0000314"/>
    <property type="project" value="SGD"/>
</dbReference>
<dbReference type="GO" id="GO:0046975">
    <property type="term" value="F:histone H3K36 methyltransferase activity"/>
    <property type="evidence" value="ECO:0000318"/>
    <property type="project" value="GO_Central"/>
</dbReference>
<dbReference type="GO" id="GO:0042800">
    <property type="term" value="F:histone H3K4 methyltransferase activity"/>
    <property type="evidence" value="ECO:0000318"/>
    <property type="project" value="GO_Central"/>
</dbReference>
<dbReference type="GO" id="GO:0003713">
    <property type="term" value="F:transcription coactivator activity"/>
    <property type="evidence" value="ECO:0000318"/>
    <property type="project" value="GO_Central"/>
</dbReference>
<dbReference type="GO" id="GO:0032259">
    <property type="term" value="P:methylation"/>
    <property type="evidence" value="ECO:0007669"/>
    <property type="project" value="UniProtKB-KW"/>
</dbReference>
<dbReference type="GO" id="GO:0045944">
    <property type="term" value="P:positive regulation of transcription by RNA polymerase II"/>
    <property type="evidence" value="ECO:0000318"/>
    <property type="project" value="GO_Central"/>
</dbReference>
<dbReference type="CDD" id="cd10527">
    <property type="entry name" value="SET_LSMT"/>
    <property type="match status" value="1"/>
</dbReference>
<dbReference type="Gene3D" id="3.90.1410.10">
    <property type="entry name" value="set domain protein methyltransferase, domain 1"/>
    <property type="match status" value="1"/>
</dbReference>
<dbReference type="InterPro" id="IPR025815">
    <property type="entry name" value="Ctm1"/>
</dbReference>
<dbReference type="InterPro" id="IPR001214">
    <property type="entry name" value="SET_dom"/>
</dbReference>
<dbReference type="InterPro" id="IPR046341">
    <property type="entry name" value="SET_dom_sf"/>
</dbReference>
<dbReference type="SUPFAM" id="SSF82199">
    <property type="entry name" value="SET domain"/>
    <property type="match status" value="1"/>
</dbReference>
<dbReference type="PROSITE" id="PS51611">
    <property type="entry name" value="SAM_MT59"/>
    <property type="match status" value="1"/>
</dbReference>
<dbReference type="PROSITE" id="PS50280">
    <property type="entry name" value="SET"/>
    <property type="match status" value="1"/>
</dbReference>
<sequence>MEEVFRFYSNSRNIFIHKSLSLKPSTIDDPKSGYGLFVEPSKFKNDELKSETIQLLRIPKRCTFNINTLLALLGDEDEFSSKEEFQRTNDKIKIALREIMAHPNFSVFLTETNLLIIYFMIFQTIRSRYEIPENIQYYLENVLMSIEVETAMDSIENLATDYGHYPQIFGLRETLNLFKELFHDVLNLSDIKHLYSAIISRCLEIPERADTKSEEFTVHSTLVPIVDFANHEGTQKNAYFDIDPSNNDVLLLLDTKAVQSELTKPIEVFISYSPTEDLFSMLVTYGFTPDFRGNSQFWTVSFDRCFLRNYDGPDKTTNLRLFYKWMHINPVVPLVKYEHNGKTRWFLNDTTPEFDMLLLPFIPSIDDGKIARWAYDSTCHLMFTKIHCLINPEANEHALMIAENYRSLIKEKESNGDDFINLPPLAWSLRYKDTENDCVRQRHICSEDAVAVLKQEEMQDSTKTKSQFTSFFRKFLEFRRSKIIRPTSDSKVASILYQQELEIIADLAKAIDSSSTIFFSDLNVTLDTEPERLPPLRFLDDYIEISADKQEPSPICEDLSYYTPSRFTDFFQEEVSQYAAFFQDD</sequence>
<organism>
    <name type="scientific">Saccharomyces cerevisiae (strain ATCC 204508 / S288c)</name>
    <name type="common">Baker's yeast</name>
    <dbReference type="NCBI Taxonomy" id="559292"/>
    <lineage>
        <taxon>Eukaryota</taxon>
        <taxon>Fungi</taxon>
        <taxon>Dikarya</taxon>
        <taxon>Ascomycota</taxon>
        <taxon>Saccharomycotina</taxon>
        <taxon>Saccharomycetes</taxon>
        <taxon>Saccharomycetales</taxon>
        <taxon>Saccharomycetaceae</taxon>
        <taxon>Saccharomyces</taxon>
    </lineage>
</organism>
<proteinExistence type="evidence at protein level"/>
<gene>
    <name type="primary">CTM1</name>
    <name type="ordered locus">YHR109W</name>
</gene>
<protein>
    <recommendedName>
        <fullName>Cytochrome c lysine N-methyltransferase 1</fullName>
        <ecNumber>2.1.1.59</ecNumber>
    </recommendedName>
</protein>